<keyword id="KW-0007">Acetylation</keyword>
<keyword id="KW-0903">Direct protein sequencing</keyword>
<keyword id="KW-0349">Heme</keyword>
<keyword id="KW-0408">Iron</keyword>
<keyword id="KW-0479">Metal-binding</keyword>
<keyword id="KW-0561">Oxygen transport</keyword>
<keyword id="KW-0813">Transport</keyword>
<protein>
    <recommendedName>
        <fullName>Hemoglobin subunit beta</fullName>
    </recommendedName>
    <alternativeName>
        <fullName>Beta-globin</fullName>
    </alternativeName>
    <alternativeName>
        <fullName>Hemoglobin beta chain</fullName>
    </alternativeName>
</protein>
<comment type="function">
    <text>Involved in oxygen transport from the lung to the various peripheral tissues.</text>
</comment>
<comment type="subunit">
    <text>Heterotetramer of two alpha chains and two beta chains.</text>
</comment>
<comment type="tissue specificity">
    <text>Red blood cells.</text>
</comment>
<comment type="similarity">
    <text evidence="1">Belongs to the globin family.</text>
</comment>
<sequence length="146" mass="16437">ASFDPHEKQLIGDLWHKVDVAHCGGEALSRMLIVYPWKRRYFENFGDISNAQAIMHNEKVQAHGKKVLASFGEAVCHLDGIRAHFANLSKLHCEKLHVDPENFKLLGDIIIIVLAAHYPKDFGLECHAAYQKLVRQVAAALAAEYH</sequence>
<organism>
    <name type="scientific">Crocodylus niloticus</name>
    <name type="common">Nile crocodile</name>
    <name type="synonym">African crocodile</name>
    <dbReference type="NCBI Taxonomy" id="8501"/>
    <lineage>
        <taxon>Eukaryota</taxon>
        <taxon>Metazoa</taxon>
        <taxon>Chordata</taxon>
        <taxon>Craniata</taxon>
        <taxon>Vertebrata</taxon>
        <taxon>Euteleostomi</taxon>
        <taxon>Archelosauria</taxon>
        <taxon>Archosauria</taxon>
        <taxon>Crocodylia</taxon>
        <taxon>Longirostres</taxon>
        <taxon>Crocodylidae</taxon>
        <taxon>Crocodylus</taxon>
    </lineage>
</organism>
<reference key="1">
    <citation type="journal article" date="1981" name="Hoppe-Seyler's Z. Physiol. Chem.">
        <title>Direct reciprocal allosteric interaction of oxygen and hydrogen carbonate sequence of the haemoglobins of the Caiman (Caiman crocodylus), the Nile crocodile (Crocodylus niloticus) and the Mississippi crocodile (Alligator mississippiensis).</title>
        <authorList>
            <person name="Leclercq F."/>
            <person name="Schnek A.G."/>
            <person name="Braunitzer G."/>
            <person name="Stangl A."/>
            <person name="Schrank B."/>
        </authorList>
    </citation>
    <scope>PROTEIN SEQUENCE</scope>
</reference>
<reference key="2">
    <citation type="journal article" date="1981" name="Z. Naturforsch. C">
        <title>Direct allosteric interaction of oxygen and bicarbonate: N-acetyl-alanyl-seryl-phenylalanine, N-terminal sequence of the beta-chains of the haemoglobins of Nil crocodile (Crocodylusniloticus) and Mississippi crocodile (Alligator mississippiensis).</title>
        <authorList>
            <person name="Schaefer W."/>
            <person name="Braunitzer G."/>
            <person name="Stangl A."/>
        </authorList>
    </citation>
    <scope>PROTEIN SEQUENCE</scope>
    <scope>ACETYLATION AT ALA-1</scope>
</reference>
<accession>P02129</accession>
<evidence type="ECO:0000255" key="1">
    <source>
        <dbReference type="PROSITE-ProRule" id="PRU00238"/>
    </source>
</evidence>
<evidence type="ECO:0000269" key="2">
    <source>
    </source>
</evidence>
<feature type="chain" id="PRO_0000052937" description="Hemoglobin subunit beta">
    <location>
        <begin position="1"/>
        <end position="146"/>
    </location>
</feature>
<feature type="domain" description="Globin" evidence="1">
    <location>
        <begin position="2"/>
        <end position="146"/>
    </location>
</feature>
<feature type="binding site" description="distal binding residue">
    <location>
        <position position="63"/>
    </location>
    <ligand>
        <name>heme b</name>
        <dbReference type="ChEBI" id="CHEBI:60344"/>
    </ligand>
    <ligandPart>
        <name>Fe</name>
        <dbReference type="ChEBI" id="CHEBI:18248"/>
    </ligandPart>
</feature>
<feature type="binding site" description="proximal binding residue">
    <location>
        <position position="92"/>
    </location>
    <ligand>
        <name>heme b</name>
        <dbReference type="ChEBI" id="CHEBI:60344"/>
    </ligand>
    <ligandPart>
        <name>Fe</name>
        <dbReference type="ChEBI" id="CHEBI:18248"/>
    </ligandPart>
</feature>
<feature type="modified residue" description="N-acetylalanine" evidence="2">
    <location>
        <position position="1"/>
    </location>
</feature>
<dbReference type="PIR" id="A91695">
    <property type="entry name" value="HBAK"/>
</dbReference>
<dbReference type="SMR" id="P02129"/>
<dbReference type="iPTMnet" id="P02129"/>
<dbReference type="GO" id="GO:0072562">
    <property type="term" value="C:blood microparticle"/>
    <property type="evidence" value="ECO:0007669"/>
    <property type="project" value="TreeGrafter"/>
</dbReference>
<dbReference type="GO" id="GO:0031838">
    <property type="term" value="C:haptoglobin-hemoglobin complex"/>
    <property type="evidence" value="ECO:0007669"/>
    <property type="project" value="TreeGrafter"/>
</dbReference>
<dbReference type="GO" id="GO:0005833">
    <property type="term" value="C:hemoglobin complex"/>
    <property type="evidence" value="ECO:0007669"/>
    <property type="project" value="InterPro"/>
</dbReference>
<dbReference type="GO" id="GO:0031720">
    <property type="term" value="F:haptoglobin binding"/>
    <property type="evidence" value="ECO:0007669"/>
    <property type="project" value="TreeGrafter"/>
</dbReference>
<dbReference type="GO" id="GO:0020037">
    <property type="term" value="F:heme binding"/>
    <property type="evidence" value="ECO:0007669"/>
    <property type="project" value="InterPro"/>
</dbReference>
<dbReference type="GO" id="GO:0046872">
    <property type="term" value="F:metal ion binding"/>
    <property type="evidence" value="ECO:0007669"/>
    <property type="project" value="UniProtKB-KW"/>
</dbReference>
<dbReference type="GO" id="GO:0043177">
    <property type="term" value="F:organic acid binding"/>
    <property type="evidence" value="ECO:0007669"/>
    <property type="project" value="TreeGrafter"/>
</dbReference>
<dbReference type="GO" id="GO:0019825">
    <property type="term" value="F:oxygen binding"/>
    <property type="evidence" value="ECO:0007669"/>
    <property type="project" value="InterPro"/>
</dbReference>
<dbReference type="GO" id="GO:0005344">
    <property type="term" value="F:oxygen carrier activity"/>
    <property type="evidence" value="ECO:0007669"/>
    <property type="project" value="UniProtKB-KW"/>
</dbReference>
<dbReference type="GO" id="GO:0004601">
    <property type="term" value="F:peroxidase activity"/>
    <property type="evidence" value="ECO:0007669"/>
    <property type="project" value="TreeGrafter"/>
</dbReference>
<dbReference type="GO" id="GO:0042744">
    <property type="term" value="P:hydrogen peroxide catabolic process"/>
    <property type="evidence" value="ECO:0007669"/>
    <property type="project" value="TreeGrafter"/>
</dbReference>
<dbReference type="CDD" id="cd08925">
    <property type="entry name" value="Hb-beta-like"/>
    <property type="match status" value="1"/>
</dbReference>
<dbReference type="FunFam" id="1.10.490.10:FF:000001">
    <property type="entry name" value="Hemoglobin subunit beta"/>
    <property type="match status" value="1"/>
</dbReference>
<dbReference type="Gene3D" id="1.10.490.10">
    <property type="entry name" value="Globins"/>
    <property type="match status" value="1"/>
</dbReference>
<dbReference type="InterPro" id="IPR000971">
    <property type="entry name" value="Globin"/>
</dbReference>
<dbReference type="InterPro" id="IPR009050">
    <property type="entry name" value="Globin-like_sf"/>
</dbReference>
<dbReference type="InterPro" id="IPR012292">
    <property type="entry name" value="Globin/Proto"/>
</dbReference>
<dbReference type="InterPro" id="IPR002337">
    <property type="entry name" value="Hemoglobin_b"/>
</dbReference>
<dbReference type="InterPro" id="IPR050056">
    <property type="entry name" value="Hemoglobin_oxygen_transport"/>
</dbReference>
<dbReference type="PANTHER" id="PTHR11442">
    <property type="entry name" value="HEMOGLOBIN FAMILY MEMBER"/>
    <property type="match status" value="1"/>
</dbReference>
<dbReference type="PANTHER" id="PTHR11442:SF7">
    <property type="entry name" value="HEMOGLOBIN SUBUNIT EPSILON"/>
    <property type="match status" value="1"/>
</dbReference>
<dbReference type="Pfam" id="PF00042">
    <property type="entry name" value="Globin"/>
    <property type="match status" value="1"/>
</dbReference>
<dbReference type="PRINTS" id="PR00814">
    <property type="entry name" value="BETAHAEM"/>
</dbReference>
<dbReference type="SUPFAM" id="SSF46458">
    <property type="entry name" value="Globin-like"/>
    <property type="match status" value="1"/>
</dbReference>
<dbReference type="PROSITE" id="PS01033">
    <property type="entry name" value="GLOBIN"/>
    <property type="match status" value="1"/>
</dbReference>
<proteinExistence type="evidence at protein level"/>
<gene>
    <name type="primary">HBB</name>
</gene>
<name>HBB_CRONI</name>